<sequence>MTNHIAGGGNPPGPEGDASAGIDVVLVTGLSGAGRGTAAKVLEDLGWYVADNLPPQLITRMVDFGLAAGSRITQLAVVMDVRSRGFTGDLDSVRNELATRNITPRVVFMEASDDMLVRRYEQNRRSHPLQGGHTLAEGIAAERKMLEPVRATADLIIDTSTLSVRGLRENIERAFGGDAAAITSVTVESFGFKYGLPMDADMVMDVRFLPNPHWVDELRPLTGQHQAVSDYVLGRPGASEFLQTYHELLSLVVEGYRREGKRYMTVAIGCTGGKHRSVAIAEALVGLLRSNSRLSVRVLHRDLGRE</sequence>
<protein>
    <recommendedName>
        <fullName evidence="1">Nucleotide-binding protein MMAR_2228</fullName>
    </recommendedName>
</protein>
<comment type="function">
    <text evidence="1">Displays ATPase and GTPase activities.</text>
</comment>
<comment type="similarity">
    <text evidence="1">Belongs to the RapZ-like family.</text>
</comment>
<proteinExistence type="inferred from homology"/>
<accession>B2HP73</accession>
<evidence type="ECO:0000255" key="1">
    <source>
        <dbReference type="HAMAP-Rule" id="MF_00636"/>
    </source>
</evidence>
<reference key="1">
    <citation type="journal article" date="2008" name="Genome Res.">
        <title>Insights from the complete genome sequence of Mycobacterium marinum on the evolution of Mycobacterium tuberculosis.</title>
        <authorList>
            <person name="Stinear T.P."/>
            <person name="Seemann T."/>
            <person name="Harrison P.F."/>
            <person name="Jenkin G.A."/>
            <person name="Davies J.K."/>
            <person name="Johnson P.D."/>
            <person name="Abdellah Z."/>
            <person name="Arrowsmith C."/>
            <person name="Chillingworth T."/>
            <person name="Churcher C."/>
            <person name="Clarke K."/>
            <person name="Cronin A."/>
            <person name="Davis P."/>
            <person name="Goodhead I."/>
            <person name="Holroyd N."/>
            <person name="Jagels K."/>
            <person name="Lord A."/>
            <person name="Moule S."/>
            <person name="Mungall K."/>
            <person name="Norbertczak H."/>
            <person name="Quail M.A."/>
            <person name="Rabbinowitsch E."/>
            <person name="Walker D."/>
            <person name="White B."/>
            <person name="Whitehead S."/>
            <person name="Small P.L."/>
            <person name="Brosch R."/>
            <person name="Ramakrishnan L."/>
            <person name="Fischbach M.A."/>
            <person name="Parkhill J."/>
            <person name="Cole S.T."/>
        </authorList>
    </citation>
    <scope>NUCLEOTIDE SEQUENCE [LARGE SCALE GENOMIC DNA]</scope>
    <source>
        <strain>ATCC BAA-535 / M</strain>
    </source>
</reference>
<gene>
    <name type="ordered locus">MMAR_2228</name>
</gene>
<feature type="chain" id="PRO_1000130768" description="Nucleotide-binding protein MMAR_2228">
    <location>
        <begin position="1"/>
        <end position="306"/>
    </location>
</feature>
<feature type="binding site" evidence="1">
    <location>
        <begin position="29"/>
        <end position="36"/>
    </location>
    <ligand>
        <name>ATP</name>
        <dbReference type="ChEBI" id="CHEBI:30616"/>
    </ligand>
</feature>
<feature type="binding site" evidence="1">
    <location>
        <begin position="80"/>
        <end position="83"/>
    </location>
    <ligand>
        <name>GTP</name>
        <dbReference type="ChEBI" id="CHEBI:37565"/>
    </ligand>
</feature>
<organism>
    <name type="scientific">Mycobacterium marinum (strain ATCC BAA-535 / M)</name>
    <dbReference type="NCBI Taxonomy" id="216594"/>
    <lineage>
        <taxon>Bacteria</taxon>
        <taxon>Bacillati</taxon>
        <taxon>Actinomycetota</taxon>
        <taxon>Actinomycetes</taxon>
        <taxon>Mycobacteriales</taxon>
        <taxon>Mycobacteriaceae</taxon>
        <taxon>Mycobacterium</taxon>
        <taxon>Mycobacterium ulcerans group</taxon>
    </lineage>
</organism>
<dbReference type="EMBL" id="CP000854">
    <property type="protein sequence ID" value="ACC40677.1"/>
    <property type="molecule type" value="Genomic_DNA"/>
</dbReference>
<dbReference type="RefSeq" id="WP_011739911.1">
    <property type="nucleotide sequence ID" value="NC_010612.1"/>
</dbReference>
<dbReference type="SMR" id="B2HP73"/>
<dbReference type="STRING" id="216594.MMAR_2228"/>
<dbReference type="KEGG" id="mmi:MMAR_2228"/>
<dbReference type="eggNOG" id="COG1660">
    <property type="taxonomic scope" value="Bacteria"/>
</dbReference>
<dbReference type="HOGENOM" id="CLU_059558_0_0_11"/>
<dbReference type="OrthoDB" id="9784461at2"/>
<dbReference type="Proteomes" id="UP000001190">
    <property type="component" value="Chromosome"/>
</dbReference>
<dbReference type="GO" id="GO:0005524">
    <property type="term" value="F:ATP binding"/>
    <property type="evidence" value="ECO:0007669"/>
    <property type="project" value="UniProtKB-UniRule"/>
</dbReference>
<dbReference type="GO" id="GO:0005525">
    <property type="term" value="F:GTP binding"/>
    <property type="evidence" value="ECO:0007669"/>
    <property type="project" value="UniProtKB-UniRule"/>
</dbReference>
<dbReference type="HAMAP" id="MF_00636">
    <property type="entry name" value="RapZ_like"/>
    <property type="match status" value="1"/>
</dbReference>
<dbReference type="InterPro" id="IPR027417">
    <property type="entry name" value="P-loop_NTPase"/>
</dbReference>
<dbReference type="InterPro" id="IPR005337">
    <property type="entry name" value="RapZ-like"/>
</dbReference>
<dbReference type="InterPro" id="IPR053930">
    <property type="entry name" value="RapZ-like_N"/>
</dbReference>
<dbReference type="InterPro" id="IPR053931">
    <property type="entry name" value="RapZ_C"/>
</dbReference>
<dbReference type="NCBIfam" id="NF003828">
    <property type="entry name" value="PRK05416.1"/>
    <property type="match status" value="1"/>
</dbReference>
<dbReference type="PANTHER" id="PTHR30448">
    <property type="entry name" value="RNASE ADAPTER PROTEIN RAPZ"/>
    <property type="match status" value="1"/>
</dbReference>
<dbReference type="PANTHER" id="PTHR30448:SF0">
    <property type="entry name" value="RNASE ADAPTER PROTEIN RAPZ"/>
    <property type="match status" value="1"/>
</dbReference>
<dbReference type="Pfam" id="PF22740">
    <property type="entry name" value="PapZ_C"/>
    <property type="match status" value="1"/>
</dbReference>
<dbReference type="Pfam" id="PF03668">
    <property type="entry name" value="RapZ-like_N"/>
    <property type="match status" value="1"/>
</dbReference>
<dbReference type="PIRSF" id="PIRSF005052">
    <property type="entry name" value="P-loopkin"/>
    <property type="match status" value="1"/>
</dbReference>
<dbReference type="SUPFAM" id="SSF52540">
    <property type="entry name" value="P-loop containing nucleoside triphosphate hydrolases"/>
    <property type="match status" value="1"/>
</dbReference>
<name>Y2228_MYCMM</name>
<keyword id="KW-0067">ATP-binding</keyword>
<keyword id="KW-0342">GTP-binding</keyword>
<keyword id="KW-0547">Nucleotide-binding</keyword>
<keyword id="KW-1185">Reference proteome</keyword>